<dbReference type="EMBL" id="AF046871">
    <property type="protein sequence ID" value="AAC03105.1"/>
    <property type="molecule type" value="Genomic_DNA"/>
</dbReference>
<dbReference type="EMBL" id="BA000019">
    <property type="protein sequence ID" value="BAB73997.1"/>
    <property type="molecule type" value="Genomic_DNA"/>
</dbReference>
<dbReference type="PIR" id="AC2093">
    <property type="entry name" value="AC2093"/>
</dbReference>
<dbReference type="RefSeq" id="WP_010996455.1">
    <property type="nucleotide sequence ID" value="NZ_RSCN01000004.1"/>
</dbReference>
<dbReference type="SMR" id="O52750"/>
<dbReference type="STRING" id="103690.gene:10494327"/>
<dbReference type="KEGG" id="ana:alr2298"/>
<dbReference type="eggNOG" id="COG0391">
    <property type="taxonomic scope" value="Bacteria"/>
</dbReference>
<dbReference type="OrthoDB" id="9783842at2"/>
<dbReference type="Proteomes" id="UP000002483">
    <property type="component" value="Chromosome"/>
</dbReference>
<dbReference type="GO" id="GO:0005737">
    <property type="term" value="C:cytoplasm"/>
    <property type="evidence" value="ECO:0007669"/>
    <property type="project" value="UniProtKB-SubCell"/>
</dbReference>
<dbReference type="GO" id="GO:0043743">
    <property type="term" value="F:LPPG:FO 2-phospho-L-lactate transferase activity"/>
    <property type="evidence" value="ECO:0007669"/>
    <property type="project" value="InterPro"/>
</dbReference>
<dbReference type="GO" id="GO:0008360">
    <property type="term" value="P:regulation of cell shape"/>
    <property type="evidence" value="ECO:0007669"/>
    <property type="project" value="UniProtKB-UniRule"/>
</dbReference>
<dbReference type="CDD" id="cd07187">
    <property type="entry name" value="YvcK_like"/>
    <property type="match status" value="1"/>
</dbReference>
<dbReference type="Gene3D" id="3.40.50.10680">
    <property type="entry name" value="CofD-like domains"/>
    <property type="match status" value="1"/>
</dbReference>
<dbReference type="HAMAP" id="MF_00973">
    <property type="entry name" value="Gluconeogen_factor"/>
    <property type="match status" value="1"/>
</dbReference>
<dbReference type="InterPro" id="IPR002882">
    <property type="entry name" value="CofD"/>
</dbReference>
<dbReference type="InterPro" id="IPR038136">
    <property type="entry name" value="CofD-like_dom_sf"/>
</dbReference>
<dbReference type="InterPro" id="IPR010119">
    <property type="entry name" value="Gluconeogen_factor"/>
</dbReference>
<dbReference type="NCBIfam" id="TIGR01826">
    <property type="entry name" value="CofD_related"/>
    <property type="match status" value="1"/>
</dbReference>
<dbReference type="PANTHER" id="PTHR30135:SF3">
    <property type="entry name" value="GLUCONEOGENESIS FACTOR-RELATED"/>
    <property type="match status" value="1"/>
</dbReference>
<dbReference type="PANTHER" id="PTHR30135">
    <property type="entry name" value="UNCHARACTERIZED PROTEIN YVCK-RELATED"/>
    <property type="match status" value="1"/>
</dbReference>
<dbReference type="Pfam" id="PF01933">
    <property type="entry name" value="CofD"/>
    <property type="match status" value="1"/>
</dbReference>
<dbReference type="SUPFAM" id="SSF142338">
    <property type="entry name" value="CofD-like"/>
    <property type="match status" value="1"/>
</dbReference>
<proteinExistence type="inferred from homology"/>
<protein>
    <recommendedName>
        <fullName evidence="1">Putative gluconeogenesis factor</fullName>
    </recommendedName>
</protein>
<feature type="chain" id="PRO_0000107801" description="Putative gluconeogenesis factor">
    <location>
        <begin position="1"/>
        <end position="456"/>
    </location>
</feature>
<comment type="function">
    <text evidence="1">Required for morphogenesis under gluconeogenic growth conditions.</text>
</comment>
<comment type="subcellular location">
    <subcellularLocation>
        <location evidence="1">Cytoplasm</location>
    </subcellularLocation>
</comment>
<comment type="similarity">
    <text evidence="1">Belongs to the gluconeogenesis factor family.</text>
</comment>
<organism>
    <name type="scientific">Nostoc sp. (strain PCC 7120 / SAG 25.82 / UTEX 2576)</name>
    <dbReference type="NCBI Taxonomy" id="103690"/>
    <lineage>
        <taxon>Bacteria</taxon>
        <taxon>Bacillati</taxon>
        <taxon>Cyanobacteriota</taxon>
        <taxon>Cyanophyceae</taxon>
        <taxon>Nostocales</taxon>
        <taxon>Nostocaceae</taxon>
        <taxon>Nostoc</taxon>
    </lineage>
</organism>
<sequence length="456" mass="49370">MSIGFLRQALNALQQQSRSRTSHRVNQWFKWLSPGLSIKRWLLISVGGVLLAILGLAIWVKLTPIFWLLELVRGFLGAVANILPNYISGPLVILGGLLLLLWGQTRTVGSITQVLRPGAEEELIDVLLAHRRLYRGPKIVVIGGGTGLSTLLRGLKTYSANITAIVTVADDGGSSGRLRQEFGVLPPGDIRNCLAALADEEKLLTELFQYRFRAGDGLTGHSFGNLFLTAMSDITGDLERAVAASSKVLAVRGQVLPATLSDVRLWAELADGRRIEGESSIPKAGGKIVKIGCIPANPPALPAAIKAIKEADYIIIGPGSLYTSLIPNLLVSDIADAIAQSQAPRIYVCNVMTQPGETQGYTVADHIRAIDAACGERQLFDAVLVHKKSPSAQSLIRYAQQDSHPVFLDREAVSQLGRRIVLANVLYEDKTGFVRHNPQKLAKVLLKWYGGAHHGK</sequence>
<accession>O52750</accession>
<reference key="1">
    <citation type="journal article" date="1998" name="Science">
        <title>Heterocyst pattern formation controlled by a diffusible peptide.</title>
        <authorList>
            <person name="Yoon H.-S."/>
            <person name="Golden J.W."/>
        </authorList>
    </citation>
    <scope>NUCLEOTIDE SEQUENCE [GENOMIC DNA]</scope>
</reference>
<reference key="2">
    <citation type="journal article" date="2001" name="DNA Res.">
        <title>Complete genomic sequence of the filamentous nitrogen-fixing cyanobacterium Anabaena sp. strain PCC 7120.</title>
        <authorList>
            <person name="Kaneko T."/>
            <person name="Nakamura Y."/>
            <person name="Wolk C.P."/>
            <person name="Kuritz T."/>
            <person name="Sasamoto S."/>
            <person name="Watanabe A."/>
            <person name="Iriguchi M."/>
            <person name="Ishikawa A."/>
            <person name="Kawashima K."/>
            <person name="Kimura T."/>
            <person name="Kishida Y."/>
            <person name="Kohara M."/>
            <person name="Matsumoto M."/>
            <person name="Matsuno A."/>
            <person name="Muraki A."/>
            <person name="Nakazaki N."/>
            <person name="Shimpo S."/>
            <person name="Sugimoto M."/>
            <person name="Takazawa M."/>
            <person name="Yamada M."/>
            <person name="Yasuda M."/>
            <person name="Tabata S."/>
        </authorList>
    </citation>
    <scope>NUCLEOTIDE SEQUENCE [LARGE SCALE GENOMIC DNA]</scope>
    <source>
        <strain>PCC 7120 / SAG 25.82 / UTEX 2576</strain>
    </source>
</reference>
<name>GNGF_NOSS1</name>
<gene>
    <name type="ordered locus">alr2298</name>
</gene>
<evidence type="ECO:0000255" key="1">
    <source>
        <dbReference type="HAMAP-Rule" id="MF_00973"/>
    </source>
</evidence>
<keyword id="KW-0963">Cytoplasm</keyword>
<keyword id="KW-1185">Reference proteome</keyword>